<dbReference type="EC" id="6.1.1.20" evidence="1"/>
<dbReference type="EMBL" id="CP000251">
    <property type="protein sequence ID" value="ABC81742.1"/>
    <property type="molecule type" value="Genomic_DNA"/>
</dbReference>
<dbReference type="RefSeq" id="WP_011421024.1">
    <property type="nucleotide sequence ID" value="NC_007760.1"/>
</dbReference>
<dbReference type="SMR" id="Q2IJB3"/>
<dbReference type="STRING" id="290397.Adeh_1971"/>
<dbReference type="KEGG" id="ade:Adeh_1971"/>
<dbReference type="eggNOG" id="COG0072">
    <property type="taxonomic scope" value="Bacteria"/>
</dbReference>
<dbReference type="HOGENOM" id="CLU_016891_0_0_7"/>
<dbReference type="OrthoDB" id="9805455at2"/>
<dbReference type="Proteomes" id="UP000001935">
    <property type="component" value="Chromosome"/>
</dbReference>
<dbReference type="GO" id="GO:0009328">
    <property type="term" value="C:phenylalanine-tRNA ligase complex"/>
    <property type="evidence" value="ECO:0007669"/>
    <property type="project" value="TreeGrafter"/>
</dbReference>
<dbReference type="GO" id="GO:0005524">
    <property type="term" value="F:ATP binding"/>
    <property type="evidence" value="ECO:0007669"/>
    <property type="project" value="UniProtKB-UniRule"/>
</dbReference>
<dbReference type="GO" id="GO:0000287">
    <property type="term" value="F:magnesium ion binding"/>
    <property type="evidence" value="ECO:0007669"/>
    <property type="project" value="UniProtKB-UniRule"/>
</dbReference>
<dbReference type="GO" id="GO:0004826">
    <property type="term" value="F:phenylalanine-tRNA ligase activity"/>
    <property type="evidence" value="ECO:0007669"/>
    <property type="project" value="UniProtKB-UniRule"/>
</dbReference>
<dbReference type="GO" id="GO:0000049">
    <property type="term" value="F:tRNA binding"/>
    <property type="evidence" value="ECO:0007669"/>
    <property type="project" value="UniProtKB-KW"/>
</dbReference>
<dbReference type="GO" id="GO:0006432">
    <property type="term" value="P:phenylalanyl-tRNA aminoacylation"/>
    <property type="evidence" value="ECO:0007669"/>
    <property type="project" value="UniProtKB-UniRule"/>
</dbReference>
<dbReference type="CDD" id="cd00769">
    <property type="entry name" value="PheRS_beta_core"/>
    <property type="match status" value="1"/>
</dbReference>
<dbReference type="CDD" id="cd02796">
    <property type="entry name" value="tRNA_bind_bactPheRS"/>
    <property type="match status" value="1"/>
</dbReference>
<dbReference type="FunFam" id="2.40.50.140:FF:000045">
    <property type="entry name" value="Phenylalanine--tRNA ligase beta subunit"/>
    <property type="match status" value="1"/>
</dbReference>
<dbReference type="FunFam" id="3.50.40.10:FF:000001">
    <property type="entry name" value="Phenylalanine--tRNA ligase beta subunit"/>
    <property type="match status" value="1"/>
</dbReference>
<dbReference type="Gene3D" id="3.30.56.10">
    <property type="match status" value="2"/>
</dbReference>
<dbReference type="Gene3D" id="3.30.930.10">
    <property type="entry name" value="Bira Bifunctional Protein, Domain 2"/>
    <property type="match status" value="1"/>
</dbReference>
<dbReference type="Gene3D" id="3.30.70.380">
    <property type="entry name" value="Ferrodoxin-fold anticodon-binding domain"/>
    <property type="match status" value="1"/>
</dbReference>
<dbReference type="Gene3D" id="2.40.50.140">
    <property type="entry name" value="Nucleic acid-binding proteins"/>
    <property type="match status" value="1"/>
</dbReference>
<dbReference type="Gene3D" id="3.50.40.10">
    <property type="entry name" value="Phenylalanyl-trna Synthetase, Chain B, domain 3"/>
    <property type="match status" value="1"/>
</dbReference>
<dbReference type="HAMAP" id="MF_00283">
    <property type="entry name" value="Phe_tRNA_synth_beta1"/>
    <property type="match status" value="1"/>
</dbReference>
<dbReference type="InterPro" id="IPR045864">
    <property type="entry name" value="aa-tRNA-synth_II/BPL/LPL"/>
</dbReference>
<dbReference type="InterPro" id="IPR005146">
    <property type="entry name" value="B3/B4_tRNA-bd"/>
</dbReference>
<dbReference type="InterPro" id="IPR009061">
    <property type="entry name" value="DNA-bd_dom_put_sf"/>
</dbReference>
<dbReference type="InterPro" id="IPR005121">
    <property type="entry name" value="Fdx_antiC-bd"/>
</dbReference>
<dbReference type="InterPro" id="IPR036690">
    <property type="entry name" value="Fdx_antiC-bd_sf"/>
</dbReference>
<dbReference type="InterPro" id="IPR012340">
    <property type="entry name" value="NA-bd_OB-fold"/>
</dbReference>
<dbReference type="InterPro" id="IPR045060">
    <property type="entry name" value="Phe-tRNA-ligase_IIc_bsu"/>
</dbReference>
<dbReference type="InterPro" id="IPR004532">
    <property type="entry name" value="Phe-tRNA-ligase_IIc_bsu_bact"/>
</dbReference>
<dbReference type="InterPro" id="IPR020825">
    <property type="entry name" value="Phe-tRNA_synthase-like_B3/B4"/>
</dbReference>
<dbReference type="InterPro" id="IPR041616">
    <property type="entry name" value="PheRS_beta_core"/>
</dbReference>
<dbReference type="InterPro" id="IPR002547">
    <property type="entry name" value="tRNA-bd_dom"/>
</dbReference>
<dbReference type="InterPro" id="IPR033714">
    <property type="entry name" value="tRNA_bind_bactPheRS"/>
</dbReference>
<dbReference type="InterPro" id="IPR005147">
    <property type="entry name" value="tRNA_synthase_B5-dom"/>
</dbReference>
<dbReference type="NCBIfam" id="TIGR00472">
    <property type="entry name" value="pheT_bact"/>
    <property type="match status" value="1"/>
</dbReference>
<dbReference type="NCBIfam" id="NF045760">
    <property type="entry name" value="YtpR"/>
    <property type="match status" value="1"/>
</dbReference>
<dbReference type="PANTHER" id="PTHR10947:SF0">
    <property type="entry name" value="PHENYLALANINE--TRNA LIGASE BETA SUBUNIT"/>
    <property type="match status" value="1"/>
</dbReference>
<dbReference type="PANTHER" id="PTHR10947">
    <property type="entry name" value="PHENYLALANYL-TRNA SYNTHETASE BETA CHAIN AND LEUCINE-RICH REPEAT-CONTAINING PROTEIN 47"/>
    <property type="match status" value="1"/>
</dbReference>
<dbReference type="Pfam" id="PF03483">
    <property type="entry name" value="B3_4"/>
    <property type="match status" value="1"/>
</dbReference>
<dbReference type="Pfam" id="PF03484">
    <property type="entry name" value="B5"/>
    <property type="match status" value="1"/>
</dbReference>
<dbReference type="Pfam" id="PF03147">
    <property type="entry name" value="FDX-ACB"/>
    <property type="match status" value="1"/>
</dbReference>
<dbReference type="Pfam" id="PF01588">
    <property type="entry name" value="tRNA_bind"/>
    <property type="match status" value="1"/>
</dbReference>
<dbReference type="Pfam" id="PF17759">
    <property type="entry name" value="tRNA_synthFbeta"/>
    <property type="match status" value="1"/>
</dbReference>
<dbReference type="SMART" id="SM00873">
    <property type="entry name" value="B3_4"/>
    <property type="match status" value="1"/>
</dbReference>
<dbReference type="SMART" id="SM00874">
    <property type="entry name" value="B5"/>
    <property type="match status" value="1"/>
</dbReference>
<dbReference type="SMART" id="SM00896">
    <property type="entry name" value="FDX-ACB"/>
    <property type="match status" value="1"/>
</dbReference>
<dbReference type="SUPFAM" id="SSF54991">
    <property type="entry name" value="Anticodon-binding domain of PheRS"/>
    <property type="match status" value="1"/>
</dbReference>
<dbReference type="SUPFAM" id="SSF55681">
    <property type="entry name" value="Class II aaRS and biotin synthetases"/>
    <property type="match status" value="1"/>
</dbReference>
<dbReference type="SUPFAM" id="SSF50249">
    <property type="entry name" value="Nucleic acid-binding proteins"/>
    <property type="match status" value="1"/>
</dbReference>
<dbReference type="SUPFAM" id="SSF56037">
    <property type="entry name" value="PheT/TilS domain"/>
    <property type="match status" value="1"/>
</dbReference>
<dbReference type="SUPFAM" id="SSF46955">
    <property type="entry name" value="Putative DNA-binding domain"/>
    <property type="match status" value="1"/>
</dbReference>
<dbReference type="PROSITE" id="PS51483">
    <property type="entry name" value="B5"/>
    <property type="match status" value="1"/>
</dbReference>
<dbReference type="PROSITE" id="PS51447">
    <property type="entry name" value="FDX_ACB"/>
    <property type="match status" value="1"/>
</dbReference>
<dbReference type="PROSITE" id="PS50886">
    <property type="entry name" value="TRBD"/>
    <property type="match status" value="1"/>
</dbReference>
<reference key="1">
    <citation type="submission" date="2006-01" db="EMBL/GenBank/DDBJ databases">
        <title>Complete sequence of Anaeromyxobacter dehalogenans 2CP-C.</title>
        <authorList>
            <person name="Copeland A."/>
            <person name="Lucas S."/>
            <person name="Lapidus A."/>
            <person name="Barry K."/>
            <person name="Detter J.C."/>
            <person name="Glavina T."/>
            <person name="Hammon N."/>
            <person name="Israni S."/>
            <person name="Pitluck S."/>
            <person name="Brettin T."/>
            <person name="Bruce D."/>
            <person name="Han C."/>
            <person name="Tapia R."/>
            <person name="Gilna P."/>
            <person name="Kiss H."/>
            <person name="Schmutz J."/>
            <person name="Larimer F."/>
            <person name="Land M."/>
            <person name="Kyrpides N."/>
            <person name="Anderson I."/>
            <person name="Sanford R.A."/>
            <person name="Ritalahti K.M."/>
            <person name="Thomas H.S."/>
            <person name="Kirby J.R."/>
            <person name="Zhulin I.B."/>
            <person name="Loeffler F.E."/>
            <person name="Richardson P."/>
        </authorList>
    </citation>
    <scope>NUCLEOTIDE SEQUENCE [LARGE SCALE GENOMIC DNA]</scope>
    <source>
        <strain>2CP-C</strain>
    </source>
</reference>
<comment type="catalytic activity">
    <reaction evidence="1">
        <text>tRNA(Phe) + L-phenylalanine + ATP = L-phenylalanyl-tRNA(Phe) + AMP + diphosphate + H(+)</text>
        <dbReference type="Rhea" id="RHEA:19413"/>
        <dbReference type="Rhea" id="RHEA-COMP:9668"/>
        <dbReference type="Rhea" id="RHEA-COMP:9699"/>
        <dbReference type="ChEBI" id="CHEBI:15378"/>
        <dbReference type="ChEBI" id="CHEBI:30616"/>
        <dbReference type="ChEBI" id="CHEBI:33019"/>
        <dbReference type="ChEBI" id="CHEBI:58095"/>
        <dbReference type="ChEBI" id="CHEBI:78442"/>
        <dbReference type="ChEBI" id="CHEBI:78531"/>
        <dbReference type="ChEBI" id="CHEBI:456215"/>
        <dbReference type="EC" id="6.1.1.20"/>
    </reaction>
</comment>
<comment type="cofactor">
    <cofactor evidence="1">
        <name>Mg(2+)</name>
        <dbReference type="ChEBI" id="CHEBI:18420"/>
    </cofactor>
    <text evidence="1">Binds 2 magnesium ions per tetramer.</text>
</comment>
<comment type="subunit">
    <text evidence="1">Tetramer of two alpha and two beta subunits.</text>
</comment>
<comment type="subcellular location">
    <subcellularLocation>
        <location evidence="1">Cytoplasm</location>
    </subcellularLocation>
</comment>
<comment type="similarity">
    <text evidence="1">Belongs to the phenylalanyl-tRNA synthetase beta subunit family. Type 1 subfamily.</text>
</comment>
<accession>Q2IJB3</accession>
<name>SYFB_ANADE</name>
<feature type="chain" id="PRO_0000232795" description="Phenylalanine--tRNA ligase beta subunit">
    <location>
        <begin position="1"/>
        <end position="800"/>
    </location>
</feature>
<feature type="domain" description="tRNA-binding" evidence="1">
    <location>
        <begin position="38"/>
        <end position="147"/>
    </location>
</feature>
<feature type="domain" description="B5" evidence="1">
    <location>
        <begin position="401"/>
        <end position="477"/>
    </location>
</feature>
<feature type="domain" description="FDX-ACB" evidence="1">
    <location>
        <begin position="708"/>
        <end position="799"/>
    </location>
</feature>
<feature type="binding site" evidence="1">
    <location>
        <position position="455"/>
    </location>
    <ligand>
        <name>Mg(2+)</name>
        <dbReference type="ChEBI" id="CHEBI:18420"/>
        <note>shared with alpha subunit</note>
    </ligand>
</feature>
<feature type="binding site" evidence="1">
    <location>
        <position position="461"/>
    </location>
    <ligand>
        <name>Mg(2+)</name>
        <dbReference type="ChEBI" id="CHEBI:18420"/>
        <note>shared with alpha subunit</note>
    </ligand>
</feature>
<feature type="binding site" evidence="1">
    <location>
        <position position="464"/>
    </location>
    <ligand>
        <name>Mg(2+)</name>
        <dbReference type="ChEBI" id="CHEBI:18420"/>
        <note>shared with alpha subunit</note>
    </ligand>
</feature>
<feature type="binding site" evidence="1">
    <location>
        <position position="465"/>
    </location>
    <ligand>
        <name>Mg(2+)</name>
        <dbReference type="ChEBI" id="CHEBI:18420"/>
        <note>shared with alpha subunit</note>
    </ligand>
</feature>
<gene>
    <name evidence="1" type="primary">pheT</name>
    <name type="ordered locus">Adeh_1971</name>
</gene>
<protein>
    <recommendedName>
        <fullName evidence="1">Phenylalanine--tRNA ligase beta subunit</fullName>
        <ecNumber evidence="1">6.1.1.20</ecNumber>
    </recommendedName>
    <alternativeName>
        <fullName evidence="1">Phenylalanyl-tRNA synthetase beta subunit</fullName>
        <shortName evidence="1">PheRS</shortName>
    </alternativeName>
</protein>
<proteinExistence type="inferred from homology"/>
<evidence type="ECO:0000255" key="1">
    <source>
        <dbReference type="HAMAP-Rule" id="MF_00283"/>
    </source>
</evidence>
<organism>
    <name type="scientific">Anaeromyxobacter dehalogenans (strain 2CP-C)</name>
    <dbReference type="NCBI Taxonomy" id="290397"/>
    <lineage>
        <taxon>Bacteria</taxon>
        <taxon>Pseudomonadati</taxon>
        <taxon>Myxococcota</taxon>
        <taxon>Myxococcia</taxon>
        <taxon>Myxococcales</taxon>
        <taxon>Cystobacterineae</taxon>
        <taxon>Anaeromyxobacteraceae</taxon>
        <taxon>Anaeromyxobacter</taxon>
    </lineage>
</organism>
<keyword id="KW-0030">Aminoacyl-tRNA synthetase</keyword>
<keyword id="KW-0067">ATP-binding</keyword>
<keyword id="KW-0963">Cytoplasm</keyword>
<keyword id="KW-0436">Ligase</keyword>
<keyword id="KW-0460">Magnesium</keyword>
<keyword id="KW-0479">Metal-binding</keyword>
<keyword id="KW-0547">Nucleotide-binding</keyword>
<keyword id="KW-0648">Protein biosynthesis</keyword>
<keyword id="KW-1185">Reference proteome</keyword>
<keyword id="KW-0694">RNA-binding</keyword>
<keyword id="KW-0820">tRNA-binding</keyword>
<sequence length="800" mass="84228">MRISLKWLSEYVDLPAPEELARRLTAVGFEIEAVERTGAELKGVVAARIAASEPHPNAEKLSVTRVDAGGGEPLQVVCGAKNYRVGDVVPLATVGAELPGGARISKAKLRGVESFGMLCSARELGLSADASGLLILPPGTVPGTPIGEALDLDDVLLEVNVTPNRPDALSHVGIAREVAALLGQKVRLPKPGLVEGGGAAADAVKVRIEAPEKCARYAARVVEGVKIGPSPAWLARRLERCGIRSISNVVDATNYVLLELGHPLHAFDLDEVAGHEIVVRTARPGERITTLDGKDRALEPDDLLIADRDRGSALAGVMGGGDSEISAGTTRVLLESAWFAPSGVRRTSRRHGLKSEASYRFERGADPGMVIPALDRCAALIAGLSGGTVRAGVVDAQARKVASPEVRMRWDRPAQVLGMPVSREDARRILLSLGFEERASDGDAVSFGVPSWRVDVSIEEDLVEEIVRTLGYDAIPETLPGPAVRTPAESAEAQAVARARAALEAAGFSEAVNFSFVAARDLEPLAGGLAADGIALRNPISADLAVMRTSLVPSLLRNAAHNRRQRVEDVRLYEIARAYGPRAAGTPGDAPSHEATEVAGVLLGRRSPVGWAVGGDVADFHDAKAAVQGLLEALGVEAAWAAPGPGWLHPRTSAALRAPGGAALGELGELHPRVAEAFELPRGVLAFRLSLDALLAAARLVPQYRPIPRLPAVLRDVAVVVEDAVTAAAVEALVREEPLVEAVILFDVYKGAPLPAGRKNLALAITYRAPDRTLTDAEADAAHGRIVARLRERVGAELRG</sequence>